<organism>
    <name type="scientific">Bacillus subtilis (strain 168)</name>
    <dbReference type="NCBI Taxonomy" id="224308"/>
    <lineage>
        <taxon>Bacteria</taxon>
        <taxon>Bacillati</taxon>
        <taxon>Bacillota</taxon>
        <taxon>Bacilli</taxon>
        <taxon>Bacillales</taxon>
        <taxon>Bacillaceae</taxon>
        <taxon>Bacillus</taxon>
    </lineage>
</organism>
<keyword id="KW-0190">Covalent protein-DNA linkage</keyword>
<keyword id="KW-0227">DNA damage</keyword>
<keyword id="KW-0238">DNA-binding</keyword>
<keyword id="KW-0378">Hydrolase</keyword>
<keyword id="KW-0456">Lyase</keyword>
<keyword id="KW-0645">Protease</keyword>
<keyword id="KW-1185">Reference proteome</keyword>
<keyword id="KW-0742">SOS response</keyword>
<protein>
    <recommendedName>
        <fullName evidence="4">Abasic site processing protein YoqW</fullName>
        <ecNumber evidence="1">4.-.-.-</ecNumber>
    </recommendedName>
    <alternativeName>
        <fullName>Peptidase YoqW</fullName>
        <ecNumber evidence="2">3.4.-.-</ecNumber>
    </alternativeName>
</protein>
<comment type="function">
    <text evidence="1 2">Sensor of abasic sites in single-stranded DNA (ssDNA) required to preserve genome integrity by promoting error-free repair of abasic sites. Recognizes and binds abasic sites in ssDNA at replication forks and chemically modifies the lesion by forming a covalent cross-link with DNA: forms a stable thiazolidine linkage between a ring-opened abasic site and the alpha-amino and sulfhydryl substituents of its N-terminal catalytic cysteine residue. The DNA-protein cross-link is then reversed: able to catalyze the reversal of the thiazolidine cross-link and cycle between a cross-link and a non-cross-linked state depending on DNA context: mediates self-reversal of the thiazolidine cross-link in double stranded DNA (By similarity). May act as a protease: mediates autocatalytic processing of its N-terminal methionine in order to expose the catalytic cysteine (By similarity).</text>
</comment>
<comment type="activity regulation">
    <text evidence="3">Formation and reversal of DNA-protein cross-link depends on DNA context. Catalyzes formation of the thiazolidine linkage in presence of abasic sites in single-stranded DNA. Mediates the reversal of the thiazolidine cross-link in presence of double stranded DNA.</text>
</comment>
<comment type="domain">
    <text evidence="1 3">The N-terminal catalytic Cys-2 residue forms a thiazolidine linkage to a ring-opened DNA abasic site (By similarity). Glu-106 catalyzes reversal of the thiazolidine linkage; self-reversal is favoured by duplex DNA formation (By similarity). Glu-106 is also involved in sensing abasic sites in single-stranded DNA (ssDNA). His-163 stabilizes the abasic sites by forming a hydrogen bond with the O4' hydroxyl group (By similarity).</text>
</comment>
<comment type="similarity">
    <text evidence="4">Belongs to the SOS response-associated peptidase family.</text>
</comment>
<dbReference type="EC" id="4.-.-.-" evidence="1"/>
<dbReference type="EC" id="3.4.-.-" evidence="2"/>
<dbReference type="EMBL" id="AL009126">
    <property type="protein sequence ID" value="CAB13941.1"/>
    <property type="molecule type" value="Genomic_DNA"/>
</dbReference>
<dbReference type="RefSeq" id="NP_389931.1">
    <property type="nucleotide sequence ID" value="NC_000964.3"/>
</dbReference>
<dbReference type="RefSeq" id="WP_004399300.1">
    <property type="nucleotide sequence ID" value="NZ_OZ025638.1"/>
</dbReference>
<dbReference type="SMR" id="O31916"/>
<dbReference type="FunCoup" id="O31916">
    <property type="interactions" value="426"/>
</dbReference>
<dbReference type="STRING" id="224308.BSU20490"/>
<dbReference type="PaxDb" id="224308-BSU20490"/>
<dbReference type="EnsemblBacteria" id="CAB13941">
    <property type="protein sequence ID" value="CAB13941"/>
    <property type="gene ID" value="BSU_20490"/>
</dbReference>
<dbReference type="GeneID" id="939979"/>
<dbReference type="KEGG" id="bsu:BSU20490"/>
<dbReference type="PATRIC" id="fig|224308.179.peg.2239"/>
<dbReference type="eggNOG" id="COG2135">
    <property type="taxonomic scope" value="Bacteria"/>
</dbReference>
<dbReference type="InParanoid" id="O31916"/>
<dbReference type="OrthoDB" id="9782620at2"/>
<dbReference type="PhylomeDB" id="O31916"/>
<dbReference type="BioCyc" id="BSUB:BSU20490-MONOMER"/>
<dbReference type="Proteomes" id="UP000001570">
    <property type="component" value="Chromosome"/>
</dbReference>
<dbReference type="GO" id="GO:0016829">
    <property type="term" value="F:lyase activity"/>
    <property type="evidence" value="ECO:0007669"/>
    <property type="project" value="UniProtKB-KW"/>
</dbReference>
<dbReference type="GO" id="GO:0008233">
    <property type="term" value="F:peptidase activity"/>
    <property type="evidence" value="ECO:0007669"/>
    <property type="project" value="UniProtKB-KW"/>
</dbReference>
<dbReference type="GO" id="GO:0003697">
    <property type="term" value="F:single-stranded DNA binding"/>
    <property type="evidence" value="ECO:0007669"/>
    <property type="project" value="InterPro"/>
</dbReference>
<dbReference type="GO" id="GO:0106300">
    <property type="term" value="P:protein-DNA covalent cross-linking repair"/>
    <property type="evidence" value="ECO:0007669"/>
    <property type="project" value="InterPro"/>
</dbReference>
<dbReference type="GO" id="GO:0006508">
    <property type="term" value="P:proteolysis"/>
    <property type="evidence" value="ECO:0007669"/>
    <property type="project" value="UniProtKB-KW"/>
</dbReference>
<dbReference type="GO" id="GO:0009432">
    <property type="term" value="P:SOS response"/>
    <property type="evidence" value="ECO:0007669"/>
    <property type="project" value="UniProtKB-KW"/>
</dbReference>
<dbReference type="Gene3D" id="3.90.1680.10">
    <property type="entry name" value="SOS response associated peptidase-like"/>
    <property type="match status" value="1"/>
</dbReference>
<dbReference type="InterPro" id="IPR003738">
    <property type="entry name" value="SRAP"/>
</dbReference>
<dbReference type="InterPro" id="IPR036590">
    <property type="entry name" value="SRAP-like"/>
</dbReference>
<dbReference type="PANTHER" id="PTHR13604:SF0">
    <property type="entry name" value="ABASIC SITE PROCESSING PROTEIN HMCES"/>
    <property type="match status" value="1"/>
</dbReference>
<dbReference type="PANTHER" id="PTHR13604">
    <property type="entry name" value="DC12-RELATED"/>
    <property type="match status" value="1"/>
</dbReference>
<dbReference type="Pfam" id="PF02586">
    <property type="entry name" value="SRAP"/>
    <property type="match status" value="1"/>
</dbReference>
<dbReference type="SUPFAM" id="SSF143081">
    <property type="entry name" value="BB1717-like"/>
    <property type="match status" value="1"/>
</dbReference>
<proteinExistence type="inferred from homology"/>
<sequence>MCGRFTLFSEFDDIIEQFNIDQFLPEGEYHPSYNVAPSQNILTIINDGSNNRLGKLRWGLIPPWAKDEKIGYKMINARAETLSEKPSFRKPLVSKRCIIPADSFYEWKRLDPKTKIPMRIKLKSSNLFAFAGLYEKWNTPEGNPLYTCTIITTKPNELMEDIHDRMPVILTDENEKEWLNPKNTDPDYLQSLLQPYDADDMEAYQVSSLVNSPKNNSPELIESH</sequence>
<gene>
    <name type="primary">yoqW</name>
    <name type="ordered locus">BSU20490</name>
</gene>
<feature type="initiator methionine" description="Removed" evidence="2">
    <location>
        <position position="1"/>
    </location>
</feature>
<feature type="chain" id="PRO_0000164403" description="Abasic site processing protein YoqW">
    <location>
        <begin position="2"/>
        <end position="224"/>
    </location>
</feature>
<feature type="active site" description="Nucleophile" evidence="3">
    <location>
        <position position="2"/>
    </location>
</feature>
<feature type="active site" evidence="3">
    <location>
        <position position="106"/>
    </location>
</feature>
<feature type="site" description="Required for sensing abasic sites" evidence="1">
    <location>
        <position position="106"/>
    </location>
</feature>
<feature type="site" description="Required to stabilize abasic sites" evidence="1">
    <location>
        <position position="163"/>
    </location>
</feature>
<feature type="modified residue" description="Thiazolidine linkage to a ring-opened DNA abasic site" evidence="1">
    <location>
        <position position="2"/>
    </location>
</feature>
<reference key="1">
    <citation type="journal article" date="1997" name="Nature">
        <title>The complete genome sequence of the Gram-positive bacterium Bacillus subtilis.</title>
        <authorList>
            <person name="Kunst F."/>
            <person name="Ogasawara N."/>
            <person name="Moszer I."/>
            <person name="Albertini A.M."/>
            <person name="Alloni G."/>
            <person name="Azevedo V."/>
            <person name="Bertero M.G."/>
            <person name="Bessieres P."/>
            <person name="Bolotin A."/>
            <person name="Borchert S."/>
            <person name="Borriss R."/>
            <person name="Boursier L."/>
            <person name="Brans A."/>
            <person name="Braun M."/>
            <person name="Brignell S.C."/>
            <person name="Bron S."/>
            <person name="Brouillet S."/>
            <person name="Bruschi C.V."/>
            <person name="Caldwell B."/>
            <person name="Capuano V."/>
            <person name="Carter N.M."/>
            <person name="Choi S.-K."/>
            <person name="Codani J.-J."/>
            <person name="Connerton I.F."/>
            <person name="Cummings N.J."/>
            <person name="Daniel R.A."/>
            <person name="Denizot F."/>
            <person name="Devine K.M."/>
            <person name="Duesterhoeft A."/>
            <person name="Ehrlich S.D."/>
            <person name="Emmerson P.T."/>
            <person name="Entian K.-D."/>
            <person name="Errington J."/>
            <person name="Fabret C."/>
            <person name="Ferrari E."/>
            <person name="Foulger D."/>
            <person name="Fritz C."/>
            <person name="Fujita M."/>
            <person name="Fujita Y."/>
            <person name="Fuma S."/>
            <person name="Galizzi A."/>
            <person name="Galleron N."/>
            <person name="Ghim S.-Y."/>
            <person name="Glaser P."/>
            <person name="Goffeau A."/>
            <person name="Golightly E.J."/>
            <person name="Grandi G."/>
            <person name="Guiseppi G."/>
            <person name="Guy B.J."/>
            <person name="Haga K."/>
            <person name="Haiech J."/>
            <person name="Harwood C.R."/>
            <person name="Henaut A."/>
            <person name="Hilbert H."/>
            <person name="Holsappel S."/>
            <person name="Hosono S."/>
            <person name="Hullo M.-F."/>
            <person name="Itaya M."/>
            <person name="Jones L.-M."/>
            <person name="Joris B."/>
            <person name="Karamata D."/>
            <person name="Kasahara Y."/>
            <person name="Klaerr-Blanchard M."/>
            <person name="Klein C."/>
            <person name="Kobayashi Y."/>
            <person name="Koetter P."/>
            <person name="Koningstein G."/>
            <person name="Krogh S."/>
            <person name="Kumano M."/>
            <person name="Kurita K."/>
            <person name="Lapidus A."/>
            <person name="Lardinois S."/>
            <person name="Lauber J."/>
            <person name="Lazarevic V."/>
            <person name="Lee S.-M."/>
            <person name="Levine A."/>
            <person name="Liu H."/>
            <person name="Masuda S."/>
            <person name="Mauel C."/>
            <person name="Medigue C."/>
            <person name="Medina N."/>
            <person name="Mellado R.P."/>
            <person name="Mizuno M."/>
            <person name="Moestl D."/>
            <person name="Nakai S."/>
            <person name="Noback M."/>
            <person name="Noone D."/>
            <person name="O'Reilly M."/>
            <person name="Ogawa K."/>
            <person name="Ogiwara A."/>
            <person name="Oudega B."/>
            <person name="Park S.-H."/>
            <person name="Parro V."/>
            <person name="Pohl T.M."/>
            <person name="Portetelle D."/>
            <person name="Porwollik S."/>
            <person name="Prescott A.M."/>
            <person name="Presecan E."/>
            <person name="Pujic P."/>
            <person name="Purnelle B."/>
            <person name="Rapoport G."/>
            <person name="Rey M."/>
            <person name="Reynolds S."/>
            <person name="Rieger M."/>
            <person name="Rivolta C."/>
            <person name="Rocha E."/>
            <person name="Roche B."/>
            <person name="Rose M."/>
            <person name="Sadaie Y."/>
            <person name="Sato T."/>
            <person name="Scanlan E."/>
            <person name="Schleich S."/>
            <person name="Schroeter R."/>
            <person name="Scoffone F."/>
            <person name="Sekiguchi J."/>
            <person name="Sekowska A."/>
            <person name="Seror S.J."/>
            <person name="Serror P."/>
            <person name="Shin B.-S."/>
            <person name="Soldo B."/>
            <person name="Sorokin A."/>
            <person name="Tacconi E."/>
            <person name="Takagi T."/>
            <person name="Takahashi H."/>
            <person name="Takemaru K."/>
            <person name="Takeuchi M."/>
            <person name="Tamakoshi A."/>
            <person name="Tanaka T."/>
            <person name="Terpstra P."/>
            <person name="Tognoni A."/>
            <person name="Tosato V."/>
            <person name="Uchiyama S."/>
            <person name="Vandenbol M."/>
            <person name="Vannier F."/>
            <person name="Vassarotti A."/>
            <person name="Viari A."/>
            <person name="Wambutt R."/>
            <person name="Wedler E."/>
            <person name="Wedler H."/>
            <person name="Weitzenegger T."/>
            <person name="Winters P."/>
            <person name="Wipat A."/>
            <person name="Yamamoto H."/>
            <person name="Yamane K."/>
            <person name="Yasumoto K."/>
            <person name="Yata K."/>
            <person name="Yoshida K."/>
            <person name="Yoshikawa H.-F."/>
            <person name="Zumstein E."/>
            <person name="Yoshikawa H."/>
            <person name="Danchin A."/>
        </authorList>
    </citation>
    <scope>NUCLEOTIDE SEQUENCE [LARGE SCALE GENOMIC DNA]</scope>
    <source>
        <strain>168</strain>
    </source>
</reference>
<accession>O31916</accession>
<name>YOQW_BACSU</name>
<evidence type="ECO:0000250" key="1">
    <source>
        <dbReference type="UniProtKB" id="P76318"/>
    </source>
</evidence>
<evidence type="ECO:0000250" key="2">
    <source>
        <dbReference type="UniProtKB" id="Q8R1M0"/>
    </source>
</evidence>
<evidence type="ECO:0000250" key="3">
    <source>
        <dbReference type="UniProtKB" id="Q96FZ2"/>
    </source>
</evidence>
<evidence type="ECO:0000305" key="4"/>